<reference key="1">
    <citation type="journal article" date="2005" name="Proc. Natl. Acad. Sci. U.S.A.">
        <title>Whole genome sequence of Staphylococcus saprophyticus reveals the pathogenesis of uncomplicated urinary tract infection.</title>
        <authorList>
            <person name="Kuroda M."/>
            <person name="Yamashita A."/>
            <person name="Hirakawa H."/>
            <person name="Kumano M."/>
            <person name="Morikawa K."/>
            <person name="Higashide M."/>
            <person name="Maruyama A."/>
            <person name="Inose Y."/>
            <person name="Matoba K."/>
            <person name="Toh H."/>
            <person name="Kuhara S."/>
            <person name="Hattori M."/>
            <person name="Ohta T."/>
        </authorList>
    </citation>
    <scope>NUCLEOTIDE SEQUENCE [LARGE SCALE GENOMIC DNA]</scope>
    <source>
        <strain>ATCC 15305 / DSM 20229 / NCIMB 8711 / NCTC 7292 / S-41</strain>
    </source>
</reference>
<protein>
    <recommendedName>
        <fullName>Low molecular weight protein-tyrosine-phosphatase PtpA</fullName>
        <ecNumber>3.1.3.48</ecNumber>
    </recommendedName>
    <alternativeName>
        <fullName>Phosphotyrosine phosphatase A</fullName>
        <shortName>PTPase A</shortName>
    </alternativeName>
</protein>
<evidence type="ECO:0000250" key="1"/>
<evidence type="ECO:0000250" key="2">
    <source>
        <dbReference type="UniProtKB" id="P11064"/>
    </source>
</evidence>
<evidence type="ECO:0000305" key="3"/>
<comment type="function">
    <text evidence="1">Dephosphorylates the phosphotyrosine-containing proteins.</text>
</comment>
<comment type="catalytic activity">
    <reaction>
        <text>O-phospho-L-tyrosyl-[protein] + H2O = L-tyrosyl-[protein] + phosphate</text>
        <dbReference type="Rhea" id="RHEA:10684"/>
        <dbReference type="Rhea" id="RHEA-COMP:10136"/>
        <dbReference type="Rhea" id="RHEA-COMP:20101"/>
        <dbReference type="ChEBI" id="CHEBI:15377"/>
        <dbReference type="ChEBI" id="CHEBI:43474"/>
        <dbReference type="ChEBI" id="CHEBI:46858"/>
        <dbReference type="ChEBI" id="CHEBI:61978"/>
        <dbReference type="EC" id="3.1.3.48"/>
    </reaction>
</comment>
<comment type="similarity">
    <text evidence="3">Belongs to the low molecular weight phosphotyrosine protein phosphatase family.</text>
</comment>
<sequence length="154" mass="17544">MITVAFVCLGNICRSPMAEAIMRQKLLDRNINDIKVTSRGTGQWNLGEPPHEGTQAILSEHDIPFDGMISELFESNDDFDYIIAMDQSNVDNIKQINPNIKGQLFKLLEFSDMTETDVPDPYYTNNFEGVYKMVQSSCDNLINFIIKDANLREE</sequence>
<proteinExistence type="inferred from homology"/>
<organism>
    <name type="scientific">Staphylococcus saprophyticus subsp. saprophyticus (strain ATCC 15305 / DSM 20229 / NCIMB 8711 / NCTC 7292 / S-41)</name>
    <dbReference type="NCBI Taxonomy" id="342451"/>
    <lineage>
        <taxon>Bacteria</taxon>
        <taxon>Bacillati</taxon>
        <taxon>Bacillota</taxon>
        <taxon>Bacilli</taxon>
        <taxon>Bacillales</taxon>
        <taxon>Staphylococcaceae</taxon>
        <taxon>Staphylococcus</taxon>
    </lineage>
</organism>
<gene>
    <name type="primary">ptpA</name>
    <name type="ordered locus">SSP0912</name>
</gene>
<feature type="chain" id="PRO_0000300669" description="Low molecular weight protein-tyrosine-phosphatase PtpA">
    <location>
        <begin position="1"/>
        <end position="154"/>
    </location>
</feature>
<feature type="active site" description="Nucleophile" evidence="2">
    <location>
        <position position="8"/>
    </location>
</feature>
<feature type="active site" evidence="2">
    <location>
        <position position="14"/>
    </location>
</feature>
<feature type="active site" description="Proton donor" evidence="2">
    <location>
        <position position="120"/>
    </location>
</feature>
<accession>Q49YS6</accession>
<name>PTPA_STAS1</name>
<keyword id="KW-0378">Hydrolase</keyword>
<keyword id="KW-0904">Protein phosphatase</keyword>
<keyword id="KW-1185">Reference proteome</keyword>
<dbReference type="EC" id="3.1.3.48"/>
<dbReference type="EMBL" id="AP008934">
    <property type="protein sequence ID" value="BAE18057.1"/>
    <property type="molecule type" value="Genomic_DNA"/>
</dbReference>
<dbReference type="RefSeq" id="WP_011302783.1">
    <property type="nucleotide sequence ID" value="NZ_MTGA01000031.1"/>
</dbReference>
<dbReference type="SMR" id="Q49YS6"/>
<dbReference type="GeneID" id="3616815"/>
<dbReference type="KEGG" id="ssp:SSP0912"/>
<dbReference type="PATRIC" id="fig|342451.11.peg.911"/>
<dbReference type="eggNOG" id="COG0394">
    <property type="taxonomic scope" value="Bacteria"/>
</dbReference>
<dbReference type="HOGENOM" id="CLU_071415_2_2_9"/>
<dbReference type="OrthoDB" id="9784339at2"/>
<dbReference type="Proteomes" id="UP000006371">
    <property type="component" value="Chromosome"/>
</dbReference>
<dbReference type="GO" id="GO:0004725">
    <property type="term" value="F:protein tyrosine phosphatase activity"/>
    <property type="evidence" value="ECO:0007669"/>
    <property type="project" value="UniProtKB-EC"/>
</dbReference>
<dbReference type="CDD" id="cd16343">
    <property type="entry name" value="LMWPTP"/>
    <property type="match status" value="1"/>
</dbReference>
<dbReference type="Gene3D" id="3.40.50.2300">
    <property type="match status" value="1"/>
</dbReference>
<dbReference type="InterPro" id="IPR050438">
    <property type="entry name" value="LMW_PTPase"/>
</dbReference>
<dbReference type="InterPro" id="IPR023485">
    <property type="entry name" value="Ptyr_pPase"/>
</dbReference>
<dbReference type="InterPro" id="IPR036196">
    <property type="entry name" value="Ptyr_pPase_sf"/>
</dbReference>
<dbReference type="InterPro" id="IPR017867">
    <property type="entry name" value="Tyr_phospatase_low_mol_wt"/>
</dbReference>
<dbReference type="PANTHER" id="PTHR11717:SF7">
    <property type="entry name" value="LOW MOLECULAR WEIGHT PHOSPHOTYROSINE PROTEIN PHOSPHATASE"/>
    <property type="match status" value="1"/>
</dbReference>
<dbReference type="PANTHER" id="PTHR11717">
    <property type="entry name" value="LOW MOLECULAR WEIGHT PROTEIN TYROSINE PHOSPHATASE"/>
    <property type="match status" value="1"/>
</dbReference>
<dbReference type="Pfam" id="PF01451">
    <property type="entry name" value="LMWPc"/>
    <property type="match status" value="1"/>
</dbReference>
<dbReference type="PRINTS" id="PR00719">
    <property type="entry name" value="LMWPTPASE"/>
</dbReference>
<dbReference type="SMART" id="SM00226">
    <property type="entry name" value="LMWPc"/>
    <property type="match status" value="1"/>
</dbReference>
<dbReference type="SUPFAM" id="SSF52788">
    <property type="entry name" value="Phosphotyrosine protein phosphatases I"/>
    <property type="match status" value="1"/>
</dbReference>